<keyword id="KW-0472">Membrane</keyword>
<keyword id="KW-0496">Mitochondrion</keyword>
<keyword id="KW-0999">Mitochondrion inner membrane</keyword>
<keyword id="KW-1185">Reference proteome</keyword>
<keyword id="KW-0809">Transit peptide</keyword>
<keyword id="KW-0812">Transmembrane</keyword>
<keyword id="KW-1133">Transmembrane helix</keyword>
<accession>Q3SZ27</accession>
<protein>
    <recommendedName>
        <fullName>MICOS complex subunit MIC27</fullName>
    </recommendedName>
    <alternativeName>
        <fullName>Apolipoprotein O-like</fullName>
    </alternativeName>
    <alternativeName>
        <fullName>Protein FAM121A</fullName>
    </alternativeName>
</protein>
<name>MIC27_BOVIN</name>
<sequence>MAALRMGKLTTMPTGLIYASISVHVAKEEESKKQLVKPEQLPIYTAPPLQSKYVEEQPGHLQMGFASIRTTTSRYIGWCKGVYVFVKNGIMDTVQFGKDAYVYLKNPPRDFLPKIGVITVSGLAGFISARKGSRFKRIAYPLGLATLGATVCYPVQSVIIAKVAGKKAYATSQQMYEAVKSLWTKNNKKLPEHKEKTKLGSADETETPAETTHNLKHSVPLPAELSSETKTKSTSGATQFMPDPKLMDHGQSHPEDIDMYSTRS</sequence>
<organism>
    <name type="scientific">Bos taurus</name>
    <name type="common">Bovine</name>
    <dbReference type="NCBI Taxonomy" id="9913"/>
    <lineage>
        <taxon>Eukaryota</taxon>
        <taxon>Metazoa</taxon>
        <taxon>Chordata</taxon>
        <taxon>Craniata</taxon>
        <taxon>Vertebrata</taxon>
        <taxon>Euteleostomi</taxon>
        <taxon>Mammalia</taxon>
        <taxon>Eutheria</taxon>
        <taxon>Laurasiatheria</taxon>
        <taxon>Artiodactyla</taxon>
        <taxon>Ruminantia</taxon>
        <taxon>Pecora</taxon>
        <taxon>Bovidae</taxon>
        <taxon>Bovinae</taxon>
        <taxon>Bos</taxon>
    </lineage>
</organism>
<evidence type="ECO:0000250" key="1">
    <source>
        <dbReference type="UniProtKB" id="Q6UXV4"/>
    </source>
</evidence>
<evidence type="ECO:0000255" key="2"/>
<evidence type="ECO:0000256" key="3">
    <source>
        <dbReference type="SAM" id="MobiDB-lite"/>
    </source>
</evidence>
<evidence type="ECO:0000305" key="4"/>
<reference key="1">
    <citation type="submission" date="2005-08" db="EMBL/GenBank/DDBJ databases">
        <authorList>
            <consortium name="NIH - Mammalian Gene Collection (MGC) project"/>
        </authorList>
    </citation>
    <scope>NUCLEOTIDE SEQUENCE [LARGE SCALE MRNA]</scope>
    <source>
        <strain>Hereford</strain>
        <tissue>Hypothalamus</tissue>
    </source>
</reference>
<gene>
    <name type="primary">APOL</name>
    <name type="synonym">FAM121A</name>
    <name type="synonym">MIC27</name>
</gene>
<comment type="function">
    <text evidence="1">Component of the MICOS complex, a large protein complex of the mitochondrial inner membrane that plays crucial roles in the maintenance of crista junctions, inner membrane architecture, and formation of contact sites to the outer membrane. Specifically binds to cardiolipin (in vitro) but not to the precursor lipid phosphatidylglycerol. Plays a crucial role in crista junction formation and mitochondrial function.</text>
</comment>
<comment type="subunit">
    <text evidence="1">Component of the mitochondrial contact site and cristae organizing system (MICOS) complex, composed of at least MICOS10/MIC10, CHCHD3/MIC19, CHCHD6/MIC25, APOOL/MIC27, IMMT/MIC60, APOO/MIC23/MIC26 and QIL1/MIC13. This complex was also known under the names MINOS or MitOS complex. The MICOS complex associates with mitochondrial outer membrane proteins SAMM50, MTX1 and MTX2 (together described as components of the mitochondrial outer membrane sorting assembly machinery (SAM) complex) and DNAJC11, mitochondrial inner membrane protein TMEM11 and with HSPA9. The MICOS and SAM complexes together with DNAJC11 are part of a large protein complex spanning both membranes termed the mitochondrial intermembrane space bridging (MIB) complex. Interacts with MICOS10/MIC10, IMMT/MIC60 and APOO/MIC23/MIC26.</text>
</comment>
<comment type="subcellular location">
    <subcellularLocation>
        <location evidence="1">Mitochondrion inner membrane</location>
        <topology evidence="1">Multi-pass membrane protein</topology>
    </subcellularLocation>
    <subcellularLocation>
        <location evidence="1">Mitochondrion</location>
    </subcellularLocation>
</comment>
<comment type="similarity">
    <text evidence="4">Belongs to the apolipoprotein O/MICOS complex subunit Mic27 family.</text>
</comment>
<dbReference type="EMBL" id="BC103214">
    <property type="protein sequence ID" value="AAI03215.1"/>
    <property type="molecule type" value="mRNA"/>
</dbReference>
<dbReference type="RefSeq" id="NP_001030203.1">
    <property type="nucleotide sequence ID" value="NM_001035031.1"/>
</dbReference>
<dbReference type="FunCoup" id="Q3SZ27">
    <property type="interactions" value="1603"/>
</dbReference>
<dbReference type="STRING" id="9913.ENSBTAP00000029044"/>
<dbReference type="PaxDb" id="9913-ENSBTAP00000029044"/>
<dbReference type="Ensembl" id="ENSBTAT00000029044.6">
    <property type="protein sequence ID" value="ENSBTAP00000029044.5"/>
    <property type="gene ID" value="ENSBTAG00000021790.7"/>
</dbReference>
<dbReference type="GeneID" id="506138"/>
<dbReference type="KEGG" id="bta:506138"/>
<dbReference type="CTD" id="139322"/>
<dbReference type="VEuPathDB" id="HostDB:ENSBTAG00000021790"/>
<dbReference type="VGNC" id="VGNC:26036">
    <property type="gene designation" value="APOOL"/>
</dbReference>
<dbReference type="eggNOG" id="KOG4798">
    <property type="taxonomic scope" value="Eukaryota"/>
</dbReference>
<dbReference type="GeneTree" id="ENSGT00530000063666"/>
<dbReference type="HOGENOM" id="CLU_048383_0_0_1"/>
<dbReference type="InParanoid" id="Q3SZ27"/>
<dbReference type="OMA" id="QVTKWAA"/>
<dbReference type="OrthoDB" id="5973346at2759"/>
<dbReference type="TreeFam" id="TF315313"/>
<dbReference type="Reactome" id="R-BTA-114608">
    <property type="pathway name" value="Platelet degranulation"/>
</dbReference>
<dbReference type="Proteomes" id="UP000009136">
    <property type="component" value="Chromosome X"/>
</dbReference>
<dbReference type="Bgee" id="ENSBTAG00000021790">
    <property type="expression patterns" value="Expressed in tongue muscle and 105 other cell types or tissues"/>
</dbReference>
<dbReference type="GO" id="GO:0061617">
    <property type="term" value="C:MICOS complex"/>
    <property type="evidence" value="ECO:0000318"/>
    <property type="project" value="GO_Central"/>
</dbReference>
<dbReference type="GO" id="GO:0042407">
    <property type="term" value="P:cristae formation"/>
    <property type="evidence" value="ECO:0000318"/>
    <property type="project" value="GO_Central"/>
</dbReference>
<dbReference type="InterPro" id="IPR019166">
    <property type="entry name" value="MIC26/MIC27"/>
</dbReference>
<dbReference type="InterPro" id="IPR033182">
    <property type="entry name" value="MIC26/MIC27_animal"/>
</dbReference>
<dbReference type="PANTHER" id="PTHR14564">
    <property type="entry name" value="MICOS COMPLEX SUBUNIT MIC26 / MIC27 FAMILY MEMBER"/>
    <property type="match status" value="1"/>
</dbReference>
<dbReference type="Pfam" id="PF09769">
    <property type="entry name" value="ApoO"/>
    <property type="match status" value="1"/>
</dbReference>
<proteinExistence type="evidence at transcript level"/>
<feature type="transit peptide" description="Mitochondrion" evidence="2">
    <location>
        <begin position="1"/>
        <end position="27"/>
    </location>
</feature>
<feature type="chain" id="PRO_0000254643" description="MICOS complex subunit MIC27">
    <location>
        <begin position="28"/>
        <end position="264"/>
    </location>
</feature>
<feature type="topological domain" description="Mitochondrial intermembrane" evidence="2">
    <location>
        <begin position="28"/>
        <end position="110"/>
    </location>
</feature>
<feature type="transmembrane region" description="Helical" evidence="2">
    <location>
        <begin position="111"/>
        <end position="129"/>
    </location>
</feature>
<feature type="topological domain" description="Mitochondrial matrix" evidence="2">
    <location>
        <begin position="130"/>
        <end position="137"/>
    </location>
</feature>
<feature type="transmembrane region" description="Helical" evidence="2">
    <location>
        <begin position="138"/>
        <end position="155"/>
    </location>
</feature>
<feature type="topological domain" description="Mitochondrial intermembrane" evidence="2">
    <location>
        <begin position="156"/>
        <end position="264"/>
    </location>
</feature>
<feature type="region of interest" description="Disordered" evidence="3">
    <location>
        <begin position="189"/>
        <end position="264"/>
    </location>
</feature>
<feature type="compositionally biased region" description="Basic and acidic residues" evidence="3">
    <location>
        <begin position="189"/>
        <end position="198"/>
    </location>
</feature>
<feature type="compositionally biased region" description="Low complexity" evidence="3">
    <location>
        <begin position="223"/>
        <end position="238"/>
    </location>
</feature>
<feature type="compositionally biased region" description="Basic and acidic residues" evidence="3">
    <location>
        <begin position="245"/>
        <end position="256"/>
    </location>
</feature>